<evidence type="ECO:0000255" key="1">
    <source>
        <dbReference type="HAMAP-Rule" id="MF_00291"/>
    </source>
</evidence>
<evidence type="ECO:0000305" key="2"/>
<gene>
    <name evidence="1" type="primary">rpsB</name>
    <name type="ordered locus">SSU98_1984</name>
</gene>
<proteinExistence type="inferred from homology"/>
<protein>
    <recommendedName>
        <fullName evidence="1">Small ribosomal subunit protein uS2</fullName>
    </recommendedName>
    <alternativeName>
        <fullName evidence="2">30S ribosomal protein S2</fullName>
    </alternativeName>
</protein>
<dbReference type="EMBL" id="CP000408">
    <property type="protein sequence ID" value="ABP93142.1"/>
    <property type="status" value="ALT_INIT"/>
    <property type="molecule type" value="Genomic_DNA"/>
</dbReference>
<dbReference type="SMR" id="A4W453"/>
<dbReference type="KEGG" id="ssv:SSU98_1984"/>
<dbReference type="HOGENOM" id="CLU_040318_1_2_9"/>
<dbReference type="GO" id="GO:0022627">
    <property type="term" value="C:cytosolic small ribosomal subunit"/>
    <property type="evidence" value="ECO:0007669"/>
    <property type="project" value="TreeGrafter"/>
</dbReference>
<dbReference type="GO" id="GO:0003735">
    <property type="term" value="F:structural constituent of ribosome"/>
    <property type="evidence" value="ECO:0007669"/>
    <property type="project" value="InterPro"/>
</dbReference>
<dbReference type="GO" id="GO:0006412">
    <property type="term" value="P:translation"/>
    <property type="evidence" value="ECO:0007669"/>
    <property type="project" value="UniProtKB-UniRule"/>
</dbReference>
<dbReference type="CDD" id="cd01425">
    <property type="entry name" value="RPS2"/>
    <property type="match status" value="1"/>
</dbReference>
<dbReference type="FunFam" id="1.10.287.610:FF:000001">
    <property type="entry name" value="30S ribosomal protein S2"/>
    <property type="match status" value="1"/>
</dbReference>
<dbReference type="Gene3D" id="3.40.50.10490">
    <property type="entry name" value="Glucose-6-phosphate isomerase like protein, domain 1"/>
    <property type="match status" value="1"/>
</dbReference>
<dbReference type="Gene3D" id="1.10.287.610">
    <property type="entry name" value="Helix hairpin bin"/>
    <property type="match status" value="1"/>
</dbReference>
<dbReference type="HAMAP" id="MF_00291_B">
    <property type="entry name" value="Ribosomal_uS2_B"/>
    <property type="match status" value="1"/>
</dbReference>
<dbReference type="InterPro" id="IPR001865">
    <property type="entry name" value="Ribosomal_uS2"/>
</dbReference>
<dbReference type="InterPro" id="IPR005706">
    <property type="entry name" value="Ribosomal_uS2_bac/mit/plastid"/>
</dbReference>
<dbReference type="InterPro" id="IPR018130">
    <property type="entry name" value="Ribosomal_uS2_CS"/>
</dbReference>
<dbReference type="InterPro" id="IPR023591">
    <property type="entry name" value="Ribosomal_uS2_flav_dom_sf"/>
</dbReference>
<dbReference type="NCBIfam" id="TIGR01011">
    <property type="entry name" value="rpsB_bact"/>
    <property type="match status" value="1"/>
</dbReference>
<dbReference type="PANTHER" id="PTHR12534">
    <property type="entry name" value="30S RIBOSOMAL PROTEIN S2 PROKARYOTIC AND ORGANELLAR"/>
    <property type="match status" value="1"/>
</dbReference>
<dbReference type="PANTHER" id="PTHR12534:SF0">
    <property type="entry name" value="SMALL RIBOSOMAL SUBUNIT PROTEIN US2M"/>
    <property type="match status" value="1"/>
</dbReference>
<dbReference type="Pfam" id="PF00318">
    <property type="entry name" value="Ribosomal_S2"/>
    <property type="match status" value="1"/>
</dbReference>
<dbReference type="PRINTS" id="PR00395">
    <property type="entry name" value="RIBOSOMALS2"/>
</dbReference>
<dbReference type="SUPFAM" id="SSF52313">
    <property type="entry name" value="Ribosomal protein S2"/>
    <property type="match status" value="1"/>
</dbReference>
<dbReference type="PROSITE" id="PS00962">
    <property type="entry name" value="RIBOSOMAL_S2_1"/>
    <property type="match status" value="1"/>
</dbReference>
<dbReference type="PROSITE" id="PS00963">
    <property type="entry name" value="RIBOSOMAL_S2_2"/>
    <property type="match status" value="1"/>
</dbReference>
<name>RS2_STRS2</name>
<comment type="similarity">
    <text evidence="1">Belongs to the universal ribosomal protein uS2 family.</text>
</comment>
<comment type="sequence caution" evidence="2">
    <conflict type="erroneous initiation">
        <sequence resource="EMBL-CDS" id="ABP93142"/>
    </conflict>
</comment>
<organism>
    <name type="scientific">Streptococcus suis (strain 98HAH33)</name>
    <dbReference type="NCBI Taxonomy" id="391296"/>
    <lineage>
        <taxon>Bacteria</taxon>
        <taxon>Bacillati</taxon>
        <taxon>Bacillota</taxon>
        <taxon>Bacilli</taxon>
        <taxon>Lactobacillales</taxon>
        <taxon>Streptococcaceae</taxon>
        <taxon>Streptococcus</taxon>
    </lineage>
</organism>
<keyword id="KW-0687">Ribonucleoprotein</keyword>
<keyword id="KW-0689">Ribosomal protein</keyword>
<sequence length="258" mass="28608">MAVISMKQLLEAGVHFGHQTRRWNPKMAKYIFTERNGIHVIDLQQTVKLADQAYEFIRDAAANDAVILFVGTKKQAAEAVKDEAIRAGQYFINHRWLGGTLTNWGTIQKRIARLKEINRMEEDGTFEVLPKKEVALLNKQRARLEKFLGGIADMPRIPDVMFVVDPHKEQIAVKEAKKLGIPVVAMVDTNTDPDDIDVIIPANDDAIRAVKLITAKMADAIIEGNQGEDSVAAVEAELAAEPASTESIEELVEVVEGK</sequence>
<feature type="chain" id="PRO_0000352042" description="Small ribosomal subunit protein uS2">
    <location>
        <begin position="1"/>
        <end position="258"/>
    </location>
</feature>
<reference key="1">
    <citation type="journal article" date="2007" name="PLoS ONE">
        <title>A glimpse of streptococcal toxic shock syndrome from comparative genomics of S. suis 2 Chinese isolates.</title>
        <authorList>
            <person name="Chen C."/>
            <person name="Tang J."/>
            <person name="Dong W."/>
            <person name="Wang C."/>
            <person name="Feng Y."/>
            <person name="Wang J."/>
            <person name="Zheng F."/>
            <person name="Pan X."/>
            <person name="Liu D."/>
            <person name="Li M."/>
            <person name="Song Y."/>
            <person name="Zhu X."/>
            <person name="Sun H."/>
            <person name="Feng T."/>
            <person name="Guo Z."/>
            <person name="Ju A."/>
            <person name="Ge J."/>
            <person name="Dong Y."/>
            <person name="Sun W."/>
            <person name="Jiang Y."/>
            <person name="Wang J."/>
            <person name="Yan J."/>
            <person name="Yang H."/>
            <person name="Wang X."/>
            <person name="Gao G.F."/>
            <person name="Yang R."/>
            <person name="Wang J."/>
            <person name="Yu J."/>
        </authorList>
    </citation>
    <scope>NUCLEOTIDE SEQUENCE [LARGE SCALE GENOMIC DNA]</scope>
    <source>
        <strain>98HAH33</strain>
    </source>
</reference>
<accession>A4W453</accession>